<comment type="function">
    <text evidence="1">Phosphorylation of dTMP to form dTDP in both de novo and salvage pathways of dTTP synthesis.</text>
</comment>
<comment type="catalytic activity">
    <reaction evidence="1">
        <text>dTMP + ATP = dTDP + ADP</text>
        <dbReference type="Rhea" id="RHEA:13517"/>
        <dbReference type="ChEBI" id="CHEBI:30616"/>
        <dbReference type="ChEBI" id="CHEBI:58369"/>
        <dbReference type="ChEBI" id="CHEBI:63528"/>
        <dbReference type="ChEBI" id="CHEBI:456216"/>
        <dbReference type="EC" id="2.7.4.9"/>
    </reaction>
</comment>
<comment type="similarity">
    <text evidence="1">Belongs to the thymidylate kinase family.</text>
</comment>
<dbReference type="EC" id="2.7.4.9" evidence="1"/>
<dbReference type="EMBL" id="CP000705">
    <property type="protein sequence ID" value="ABQ82600.1"/>
    <property type="molecule type" value="Genomic_DNA"/>
</dbReference>
<dbReference type="RefSeq" id="WP_003667383.1">
    <property type="nucleotide sequence ID" value="NC_009513.1"/>
</dbReference>
<dbReference type="SMR" id="A5VIC6"/>
<dbReference type="STRING" id="557436.Lreu_0330"/>
<dbReference type="KEGG" id="lre:Lreu_0330"/>
<dbReference type="PATRIC" id="fig|557436.17.peg.1881"/>
<dbReference type="eggNOG" id="COG0125">
    <property type="taxonomic scope" value="Bacteria"/>
</dbReference>
<dbReference type="HOGENOM" id="CLU_049131_0_2_9"/>
<dbReference type="Proteomes" id="UP000001991">
    <property type="component" value="Chromosome"/>
</dbReference>
<dbReference type="GO" id="GO:0005829">
    <property type="term" value="C:cytosol"/>
    <property type="evidence" value="ECO:0007669"/>
    <property type="project" value="TreeGrafter"/>
</dbReference>
<dbReference type="GO" id="GO:0005524">
    <property type="term" value="F:ATP binding"/>
    <property type="evidence" value="ECO:0007669"/>
    <property type="project" value="UniProtKB-UniRule"/>
</dbReference>
<dbReference type="GO" id="GO:0004798">
    <property type="term" value="F:dTMP kinase activity"/>
    <property type="evidence" value="ECO:0007669"/>
    <property type="project" value="UniProtKB-UniRule"/>
</dbReference>
<dbReference type="GO" id="GO:0006233">
    <property type="term" value="P:dTDP biosynthetic process"/>
    <property type="evidence" value="ECO:0007669"/>
    <property type="project" value="InterPro"/>
</dbReference>
<dbReference type="GO" id="GO:0006235">
    <property type="term" value="P:dTTP biosynthetic process"/>
    <property type="evidence" value="ECO:0007669"/>
    <property type="project" value="UniProtKB-UniRule"/>
</dbReference>
<dbReference type="GO" id="GO:0006227">
    <property type="term" value="P:dUDP biosynthetic process"/>
    <property type="evidence" value="ECO:0007669"/>
    <property type="project" value="TreeGrafter"/>
</dbReference>
<dbReference type="CDD" id="cd01672">
    <property type="entry name" value="TMPK"/>
    <property type="match status" value="1"/>
</dbReference>
<dbReference type="FunFam" id="3.40.50.300:FF:000225">
    <property type="entry name" value="Thymidylate kinase"/>
    <property type="match status" value="1"/>
</dbReference>
<dbReference type="Gene3D" id="3.40.50.300">
    <property type="entry name" value="P-loop containing nucleotide triphosphate hydrolases"/>
    <property type="match status" value="1"/>
</dbReference>
<dbReference type="HAMAP" id="MF_00165">
    <property type="entry name" value="Thymidylate_kinase"/>
    <property type="match status" value="1"/>
</dbReference>
<dbReference type="InterPro" id="IPR027417">
    <property type="entry name" value="P-loop_NTPase"/>
</dbReference>
<dbReference type="InterPro" id="IPR039430">
    <property type="entry name" value="Thymidylate_kin-like_dom"/>
</dbReference>
<dbReference type="InterPro" id="IPR018095">
    <property type="entry name" value="Thymidylate_kin_CS"/>
</dbReference>
<dbReference type="InterPro" id="IPR018094">
    <property type="entry name" value="Thymidylate_kinase"/>
</dbReference>
<dbReference type="NCBIfam" id="TIGR00041">
    <property type="entry name" value="DTMP_kinase"/>
    <property type="match status" value="1"/>
</dbReference>
<dbReference type="PANTHER" id="PTHR10344">
    <property type="entry name" value="THYMIDYLATE KINASE"/>
    <property type="match status" value="1"/>
</dbReference>
<dbReference type="PANTHER" id="PTHR10344:SF4">
    <property type="entry name" value="UMP-CMP KINASE 2, MITOCHONDRIAL"/>
    <property type="match status" value="1"/>
</dbReference>
<dbReference type="Pfam" id="PF02223">
    <property type="entry name" value="Thymidylate_kin"/>
    <property type="match status" value="1"/>
</dbReference>
<dbReference type="SUPFAM" id="SSF52540">
    <property type="entry name" value="P-loop containing nucleoside triphosphate hydrolases"/>
    <property type="match status" value="1"/>
</dbReference>
<dbReference type="PROSITE" id="PS01331">
    <property type="entry name" value="THYMIDYLATE_KINASE"/>
    <property type="match status" value="1"/>
</dbReference>
<evidence type="ECO:0000255" key="1">
    <source>
        <dbReference type="HAMAP-Rule" id="MF_00165"/>
    </source>
</evidence>
<protein>
    <recommendedName>
        <fullName evidence="1">Thymidylate kinase</fullName>
        <ecNumber evidence="1">2.7.4.9</ecNumber>
    </recommendedName>
    <alternativeName>
        <fullName evidence="1">dTMP kinase</fullName>
    </alternativeName>
</protein>
<feature type="chain" id="PRO_1000058252" description="Thymidylate kinase">
    <location>
        <begin position="1"/>
        <end position="213"/>
    </location>
</feature>
<feature type="binding site" evidence="1">
    <location>
        <begin position="10"/>
        <end position="17"/>
    </location>
    <ligand>
        <name>ATP</name>
        <dbReference type="ChEBI" id="CHEBI:30616"/>
    </ligand>
</feature>
<name>KTHY_LIMRD</name>
<organism>
    <name type="scientific">Limosilactobacillus reuteri (strain DSM 20016)</name>
    <name type="common">Lactobacillus reuteri</name>
    <dbReference type="NCBI Taxonomy" id="557436"/>
    <lineage>
        <taxon>Bacteria</taxon>
        <taxon>Bacillati</taxon>
        <taxon>Bacillota</taxon>
        <taxon>Bacilli</taxon>
        <taxon>Lactobacillales</taxon>
        <taxon>Lactobacillaceae</taxon>
        <taxon>Limosilactobacillus</taxon>
    </lineage>
</organism>
<sequence>MDGKFISFEGPDGAGKTSVIQQIQLELEDQLGTEKVMYTREPGGNKISEQIRQVLFDGQNTDMDGRTEALLFAAARRQHIVSEIIPGLKAGKVILCDRFVDSSIAYQGAGRGLGEKEIWQINQFAIDGLMPALTIYLDIESEIGLKRIAEHRSNQVNRLDEEKLEFHRTVRQSYLKLYQNYPERIELIDASQPLEKVIEDVKATIHDRFSDLF</sequence>
<reference key="1">
    <citation type="journal article" date="2011" name="PLoS Genet.">
        <title>The evolution of host specialization in the vertebrate gut symbiont Lactobacillus reuteri.</title>
        <authorList>
            <person name="Frese S.A."/>
            <person name="Benson A.K."/>
            <person name="Tannock G.W."/>
            <person name="Loach D.M."/>
            <person name="Kim J."/>
            <person name="Zhang M."/>
            <person name="Oh P.L."/>
            <person name="Heng N.C."/>
            <person name="Patil P.B."/>
            <person name="Juge N."/>
            <person name="Mackenzie D.A."/>
            <person name="Pearson B.M."/>
            <person name="Lapidus A."/>
            <person name="Dalin E."/>
            <person name="Tice H."/>
            <person name="Goltsman E."/>
            <person name="Land M."/>
            <person name="Hauser L."/>
            <person name="Ivanova N."/>
            <person name="Kyrpides N.C."/>
            <person name="Walter J."/>
        </authorList>
    </citation>
    <scope>NUCLEOTIDE SEQUENCE [LARGE SCALE GENOMIC DNA]</scope>
    <source>
        <strain>DSM 20016</strain>
    </source>
</reference>
<proteinExistence type="inferred from homology"/>
<accession>A5VIC6</accession>
<gene>
    <name evidence="1" type="primary">tmk</name>
    <name type="ordered locus">Lreu_0330</name>
</gene>
<keyword id="KW-0067">ATP-binding</keyword>
<keyword id="KW-0418">Kinase</keyword>
<keyword id="KW-0545">Nucleotide biosynthesis</keyword>
<keyword id="KW-0547">Nucleotide-binding</keyword>
<keyword id="KW-1185">Reference proteome</keyword>
<keyword id="KW-0808">Transferase</keyword>